<dbReference type="EMBL" id="AAFI02000089">
    <property type="protein sequence ID" value="EAL64093.1"/>
    <property type="molecule type" value="Genomic_DNA"/>
</dbReference>
<dbReference type="RefSeq" id="XP_637613.1">
    <property type="nucleotide sequence ID" value="XM_632521.1"/>
</dbReference>
<dbReference type="GlyGen" id="Q54LE8">
    <property type="glycosylation" value="1 site"/>
</dbReference>
<dbReference type="PaxDb" id="44689-DDB0304940"/>
<dbReference type="EnsemblProtists" id="EAL64093">
    <property type="protein sequence ID" value="EAL64093"/>
    <property type="gene ID" value="DDB_G0286675"/>
</dbReference>
<dbReference type="GeneID" id="8625753"/>
<dbReference type="KEGG" id="ddi:DDB_G0286675"/>
<dbReference type="dictyBase" id="DDB_G0286675"/>
<dbReference type="HOGENOM" id="CLU_2745368_0_0_1"/>
<dbReference type="InParanoid" id="Q54LE8"/>
<dbReference type="PRO" id="PR:Q54LE8"/>
<dbReference type="Proteomes" id="UP000002195">
    <property type="component" value="Chromosome 4"/>
</dbReference>
<dbReference type="GO" id="GO:0005576">
    <property type="term" value="C:extracellular region"/>
    <property type="evidence" value="ECO:0007669"/>
    <property type="project" value="UniProtKB-SubCell"/>
</dbReference>
<gene>
    <name type="ORF">DDB_G0286675</name>
</gene>
<comment type="subcellular location">
    <subcellularLocation>
        <location evidence="3">Secreted</location>
    </subcellularLocation>
</comment>
<name>Y7088_DICDI</name>
<sequence length="73" mass="7870">MTLFSSLSSLSTGSLKSSVSSIETGSSSGSFGSNETSGWGSHHWNSCHPCPPPRPICRPCPPCRPEPRCHYKY</sequence>
<feature type="signal peptide" evidence="1">
    <location>
        <begin position="1"/>
        <end position="21"/>
    </location>
</feature>
<feature type="chain" id="PRO_0000348515" description="Putative uncharacterized protein DDB_G0286675">
    <location>
        <begin position="22"/>
        <end position="73"/>
    </location>
</feature>
<feature type="region of interest" description="Disordered" evidence="2">
    <location>
        <begin position="1"/>
        <end position="43"/>
    </location>
</feature>
<feature type="compositionally biased region" description="Low complexity" evidence="2">
    <location>
        <begin position="1"/>
        <end position="38"/>
    </location>
</feature>
<feature type="glycosylation site" description="N-linked (GlcNAc...) asparagine" evidence="1">
    <location>
        <position position="34"/>
    </location>
</feature>
<proteinExistence type="inferred from homology"/>
<organism>
    <name type="scientific">Dictyostelium discoideum</name>
    <name type="common">Social amoeba</name>
    <dbReference type="NCBI Taxonomy" id="44689"/>
    <lineage>
        <taxon>Eukaryota</taxon>
        <taxon>Amoebozoa</taxon>
        <taxon>Evosea</taxon>
        <taxon>Eumycetozoa</taxon>
        <taxon>Dictyostelia</taxon>
        <taxon>Dictyosteliales</taxon>
        <taxon>Dictyosteliaceae</taxon>
        <taxon>Dictyostelium</taxon>
    </lineage>
</organism>
<reference key="1">
    <citation type="journal article" date="2005" name="Nature">
        <title>The genome of the social amoeba Dictyostelium discoideum.</title>
        <authorList>
            <person name="Eichinger L."/>
            <person name="Pachebat J.A."/>
            <person name="Gloeckner G."/>
            <person name="Rajandream M.A."/>
            <person name="Sucgang R."/>
            <person name="Berriman M."/>
            <person name="Song J."/>
            <person name="Olsen R."/>
            <person name="Szafranski K."/>
            <person name="Xu Q."/>
            <person name="Tunggal B."/>
            <person name="Kummerfeld S."/>
            <person name="Madera M."/>
            <person name="Konfortov B.A."/>
            <person name="Rivero F."/>
            <person name="Bankier A.T."/>
            <person name="Lehmann R."/>
            <person name="Hamlin N."/>
            <person name="Davies R."/>
            <person name="Gaudet P."/>
            <person name="Fey P."/>
            <person name="Pilcher K."/>
            <person name="Chen G."/>
            <person name="Saunders D."/>
            <person name="Sodergren E.J."/>
            <person name="Davis P."/>
            <person name="Kerhornou A."/>
            <person name="Nie X."/>
            <person name="Hall N."/>
            <person name="Anjard C."/>
            <person name="Hemphill L."/>
            <person name="Bason N."/>
            <person name="Farbrother P."/>
            <person name="Desany B."/>
            <person name="Just E."/>
            <person name="Morio T."/>
            <person name="Rost R."/>
            <person name="Churcher C.M."/>
            <person name="Cooper J."/>
            <person name="Haydock S."/>
            <person name="van Driessche N."/>
            <person name="Cronin A."/>
            <person name="Goodhead I."/>
            <person name="Muzny D.M."/>
            <person name="Mourier T."/>
            <person name="Pain A."/>
            <person name="Lu M."/>
            <person name="Harper D."/>
            <person name="Lindsay R."/>
            <person name="Hauser H."/>
            <person name="James K.D."/>
            <person name="Quiles M."/>
            <person name="Madan Babu M."/>
            <person name="Saito T."/>
            <person name="Buchrieser C."/>
            <person name="Wardroper A."/>
            <person name="Felder M."/>
            <person name="Thangavelu M."/>
            <person name="Johnson D."/>
            <person name="Knights A."/>
            <person name="Loulseged H."/>
            <person name="Mungall K.L."/>
            <person name="Oliver K."/>
            <person name="Price C."/>
            <person name="Quail M.A."/>
            <person name="Urushihara H."/>
            <person name="Hernandez J."/>
            <person name="Rabbinowitsch E."/>
            <person name="Steffen D."/>
            <person name="Sanders M."/>
            <person name="Ma J."/>
            <person name="Kohara Y."/>
            <person name="Sharp S."/>
            <person name="Simmonds M.N."/>
            <person name="Spiegler S."/>
            <person name="Tivey A."/>
            <person name="Sugano S."/>
            <person name="White B."/>
            <person name="Walker D."/>
            <person name="Woodward J.R."/>
            <person name="Winckler T."/>
            <person name="Tanaka Y."/>
            <person name="Shaulsky G."/>
            <person name="Schleicher M."/>
            <person name="Weinstock G.M."/>
            <person name="Rosenthal A."/>
            <person name="Cox E.C."/>
            <person name="Chisholm R.L."/>
            <person name="Gibbs R.A."/>
            <person name="Loomis W.F."/>
            <person name="Platzer M."/>
            <person name="Kay R.R."/>
            <person name="Williams J.G."/>
            <person name="Dear P.H."/>
            <person name="Noegel A.A."/>
            <person name="Barrell B.G."/>
            <person name="Kuspa A."/>
        </authorList>
    </citation>
    <scope>NUCLEOTIDE SEQUENCE [LARGE SCALE GENOMIC DNA]</scope>
    <source>
        <strain>AX4</strain>
    </source>
</reference>
<accession>Q54LE8</accession>
<evidence type="ECO:0000255" key="1"/>
<evidence type="ECO:0000256" key="2">
    <source>
        <dbReference type="SAM" id="MobiDB-lite"/>
    </source>
</evidence>
<evidence type="ECO:0000305" key="3"/>
<keyword id="KW-0325">Glycoprotein</keyword>
<keyword id="KW-1185">Reference proteome</keyword>
<keyword id="KW-0964">Secreted</keyword>
<keyword id="KW-0732">Signal</keyword>
<protein>
    <recommendedName>
        <fullName>Putative uncharacterized protein DDB_G0286675</fullName>
    </recommendedName>
</protein>